<sequence>MELTPREKDKLLLYTAALVAERRKARGLKLNYPEAMAYLSMEIVEGARDGRSVAELMAYGRTLLSRDDVMEGIPEMIPEVQVEATFPDGTKLVTVHNPIP</sequence>
<evidence type="ECO:0000255" key="1">
    <source>
        <dbReference type="HAMAP-Rule" id="MF_00739"/>
    </source>
</evidence>
<feature type="chain" id="PRO_0000239905" description="Urease subunit gamma">
    <location>
        <begin position="1"/>
        <end position="100"/>
    </location>
</feature>
<accession>Q2SDQ3</accession>
<name>URE3_HAHCH</name>
<protein>
    <recommendedName>
        <fullName evidence="1">Urease subunit gamma</fullName>
        <ecNumber evidence="1">3.5.1.5</ecNumber>
    </recommendedName>
    <alternativeName>
        <fullName evidence="1">Urea amidohydrolase subunit gamma</fullName>
    </alternativeName>
</protein>
<keyword id="KW-0963">Cytoplasm</keyword>
<keyword id="KW-0378">Hydrolase</keyword>
<keyword id="KW-1185">Reference proteome</keyword>
<organism>
    <name type="scientific">Hahella chejuensis (strain KCTC 2396)</name>
    <dbReference type="NCBI Taxonomy" id="349521"/>
    <lineage>
        <taxon>Bacteria</taxon>
        <taxon>Pseudomonadati</taxon>
        <taxon>Pseudomonadota</taxon>
        <taxon>Gammaproteobacteria</taxon>
        <taxon>Oceanospirillales</taxon>
        <taxon>Hahellaceae</taxon>
        <taxon>Hahella</taxon>
    </lineage>
</organism>
<comment type="catalytic activity">
    <reaction evidence="1">
        <text>urea + 2 H2O + H(+) = hydrogencarbonate + 2 NH4(+)</text>
        <dbReference type="Rhea" id="RHEA:20557"/>
        <dbReference type="ChEBI" id="CHEBI:15377"/>
        <dbReference type="ChEBI" id="CHEBI:15378"/>
        <dbReference type="ChEBI" id="CHEBI:16199"/>
        <dbReference type="ChEBI" id="CHEBI:17544"/>
        <dbReference type="ChEBI" id="CHEBI:28938"/>
        <dbReference type="EC" id="3.5.1.5"/>
    </reaction>
</comment>
<comment type="pathway">
    <text evidence="1">Nitrogen metabolism; urea degradation; CO(2) and NH(3) from urea (urease route): step 1/1.</text>
</comment>
<comment type="subunit">
    <text evidence="1">Heterotrimer of UreA (gamma), UreB (beta) and UreC (alpha) subunits. Three heterotrimers associate to form the active enzyme.</text>
</comment>
<comment type="subcellular location">
    <subcellularLocation>
        <location evidence="1">Cytoplasm</location>
    </subcellularLocation>
</comment>
<comment type="similarity">
    <text evidence="1">Belongs to the urease gamma subunit family.</text>
</comment>
<proteinExistence type="inferred from homology"/>
<reference key="1">
    <citation type="journal article" date="2005" name="Nucleic Acids Res.">
        <title>Genomic blueprint of Hahella chejuensis, a marine microbe producing an algicidal agent.</title>
        <authorList>
            <person name="Jeong H."/>
            <person name="Yim J.H."/>
            <person name="Lee C."/>
            <person name="Choi S.-H."/>
            <person name="Park Y.K."/>
            <person name="Yoon S.H."/>
            <person name="Hur C.-G."/>
            <person name="Kang H.-Y."/>
            <person name="Kim D."/>
            <person name="Lee H.H."/>
            <person name="Park K.H."/>
            <person name="Park S.-H."/>
            <person name="Park H.-S."/>
            <person name="Lee H.K."/>
            <person name="Oh T.K."/>
            <person name="Kim J.F."/>
        </authorList>
    </citation>
    <scope>NUCLEOTIDE SEQUENCE [LARGE SCALE GENOMIC DNA]</scope>
    <source>
        <strain>KCTC 2396</strain>
    </source>
</reference>
<dbReference type="EC" id="3.5.1.5" evidence="1"/>
<dbReference type="EMBL" id="CP000155">
    <property type="protein sequence ID" value="ABC31221.1"/>
    <property type="molecule type" value="Genomic_DNA"/>
</dbReference>
<dbReference type="RefSeq" id="WP_011398288.1">
    <property type="nucleotide sequence ID" value="NC_007645.1"/>
</dbReference>
<dbReference type="SMR" id="Q2SDQ3"/>
<dbReference type="STRING" id="349521.HCH_04521"/>
<dbReference type="KEGG" id="hch:HCH_04521"/>
<dbReference type="eggNOG" id="COG0831">
    <property type="taxonomic scope" value="Bacteria"/>
</dbReference>
<dbReference type="HOGENOM" id="CLU_145825_1_0_6"/>
<dbReference type="OrthoDB" id="9797217at2"/>
<dbReference type="UniPathway" id="UPA00258">
    <property type="reaction ID" value="UER00370"/>
</dbReference>
<dbReference type="Proteomes" id="UP000000238">
    <property type="component" value="Chromosome"/>
</dbReference>
<dbReference type="GO" id="GO:0005737">
    <property type="term" value="C:cytoplasm"/>
    <property type="evidence" value="ECO:0007669"/>
    <property type="project" value="UniProtKB-SubCell"/>
</dbReference>
<dbReference type="GO" id="GO:0016151">
    <property type="term" value="F:nickel cation binding"/>
    <property type="evidence" value="ECO:0007669"/>
    <property type="project" value="InterPro"/>
</dbReference>
<dbReference type="GO" id="GO:0009039">
    <property type="term" value="F:urease activity"/>
    <property type="evidence" value="ECO:0007669"/>
    <property type="project" value="UniProtKB-UniRule"/>
</dbReference>
<dbReference type="GO" id="GO:0043419">
    <property type="term" value="P:urea catabolic process"/>
    <property type="evidence" value="ECO:0007669"/>
    <property type="project" value="UniProtKB-UniRule"/>
</dbReference>
<dbReference type="CDD" id="cd00390">
    <property type="entry name" value="Urease_gamma"/>
    <property type="match status" value="1"/>
</dbReference>
<dbReference type="Gene3D" id="3.30.280.10">
    <property type="entry name" value="Urease, gamma-like subunit"/>
    <property type="match status" value="1"/>
</dbReference>
<dbReference type="HAMAP" id="MF_00739">
    <property type="entry name" value="Urease_gamma"/>
    <property type="match status" value="1"/>
</dbReference>
<dbReference type="InterPro" id="IPR012010">
    <property type="entry name" value="Urease_gamma"/>
</dbReference>
<dbReference type="InterPro" id="IPR002026">
    <property type="entry name" value="Urease_gamma/gamma-beta_su"/>
</dbReference>
<dbReference type="InterPro" id="IPR036463">
    <property type="entry name" value="Urease_gamma_sf"/>
</dbReference>
<dbReference type="InterPro" id="IPR050069">
    <property type="entry name" value="Urease_subunit"/>
</dbReference>
<dbReference type="NCBIfam" id="NF009712">
    <property type="entry name" value="PRK13241.1"/>
    <property type="match status" value="1"/>
</dbReference>
<dbReference type="NCBIfam" id="TIGR00193">
    <property type="entry name" value="urease_gam"/>
    <property type="match status" value="1"/>
</dbReference>
<dbReference type="PANTHER" id="PTHR33569">
    <property type="entry name" value="UREASE"/>
    <property type="match status" value="1"/>
</dbReference>
<dbReference type="PANTHER" id="PTHR33569:SF1">
    <property type="entry name" value="UREASE"/>
    <property type="match status" value="1"/>
</dbReference>
<dbReference type="Pfam" id="PF00547">
    <property type="entry name" value="Urease_gamma"/>
    <property type="match status" value="1"/>
</dbReference>
<dbReference type="PIRSF" id="PIRSF001223">
    <property type="entry name" value="Urease_gamma"/>
    <property type="match status" value="1"/>
</dbReference>
<dbReference type="SUPFAM" id="SSF54111">
    <property type="entry name" value="Urease, gamma-subunit"/>
    <property type="match status" value="1"/>
</dbReference>
<gene>
    <name evidence="1" type="primary">ureA</name>
    <name type="ordered locus">HCH_04521</name>
</gene>